<protein>
    <recommendedName>
        <fullName evidence="1">Small ribosomal subunit protein bS18</fullName>
    </recommendedName>
    <alternativeName>
        <fullName evidence="2">30S ribosomal protein S18</fullName>
    </alternativeName>
</protein>
<gene>
    <name evidence="1" type="primary">rpsR</name>
    <name type="ordered locus">BURPS1106A_2289</name>
</gene>
<name>RS18_BURP0</name>
<organism>
    <name type="scientific">Burkholderia pseudomallei (strain 1106a)</name>
    <dbReference type="NCBI Taxonomy" id="357348"/>
    <lineage>
        <taxon>Bacteria</taxon>
        <taxon>Pseudomonadati</taxon>
        <taxon>Pseudomonadota</taxon>
        <taxon>Betaproteobacteria</taxon>
        <taxon>Burkholderiales</taxon>
        <taxon>Burkholderiaceae</taxon>
        <taxon>Burkholderia</taxon>
        <taxon>pseudomallei group</taxon>
    </lineage>
</organism>
<reference key="1">
    <citation type="journal article" date="2010" name="Genome Biol. Evol.">
        <title>Continuing evolution of Burkholderia mallei through genome reduction and large-scale rearrangements.</title>
        <authorList>
            <person name="Losada L."/>
            <person name="Ronning C.M."/>
            <person name="DeShazer D."/>
            <person name="Woods D."/>
            <person name="Fedorova N."/>
            <person name="Kim H.S."/>
            <person name="Shabalina S.A."/>
            <person name="Pearson T.R."/>
            <person name="Brinkac L."/>
            <person name="Tan P."/>
            <person name="Nandi T."/>
            <person name="Crabtree J."/>
            <person name="Badger J."/>
            <person name="Beckstrom-Sternberg S."/>
            <person name="Saqib M."/>
            <person name="Schutzer S.E."/>
            <person name="Keim P."/>
            <person name="Nierman W.C."/>
        </authorList>
    </citation>
    <scope>NUCLEOTIDE SEQUENCE [LARGE SCALE GENOMIC DNA]</scope>
    <source>
        <strain>1106a</strain>
    </source>
</reference>
<feature type="chain" id="PRO_1000003463" description="Small ribosomal subunit protein bS18">
    <location>
        <begin position="1"/>
        <end position="91"/>
    </location>
</feature>
<dbReference type="EMBL" id="CP000572">
    <property type="protein sequence ID" value="ABN92069.1"/>
    <property type="molecule type" value="Genomic_DNA"/>
</dbReference>
<dbReference type="RefSeq" id="WP_004193360.1">
    <property type="nucleotide sequence ID" value="NC_009076.1"/>
</dbReference>
<dbReference type="SMR" id="A3NW32"/>
<dbReference type="GeneID" id="93173028"/>
<dbReference type="KEGG" id="bpl:BURPS1106A_2289"/>
<dbReference type="HOGENOM" id="CLU_148710_0_3_4"/>
<dbReference type="Proteomes" id="UP000006738">
    <property type="component" value="Chromosome I"/>
</dbReference>
<dbReference type="GO" id="GO:0022627">
    <property type="term" value="C:cytosolic small ribosomal subunit"/>
    <property type="evidence" value="ECO:0007669"/>
    <property type="project" value="TreeGrafter"/>
</dbReference>
<dbReference type="GO" id="GO:0070181">
    <property type="term" value="F:small ribosomal subunit rRNA binding"/>
    <property type="evidence" value="ECO:0007669"/>
    <property type="project" value="TreeGrafter"/>
</dbReference>
<dbReference type="GO" id="GO:0003735">
    <property type="term" value="F:structural constituent of ribosome"/>
    <property type="evidence" value="ECO:0007669"/>
    <property type="project" value="InterPro"/>
</dbReference>
<dbReference type="GO" id="GO:0006412">
    <property type="term" value="P:translation"/>
    <property type="evidence" value="ECO:0007669"/>
    <property type="project" value="UniProtKB-UniRule"/>
</dbReference>
<dbReference type="Gene3D" id="4.10.640.10">
    <property type="entry name" value="Ribosomal protein S18"/>
    <property type="match status" value="1"/>
</dbReference>
<dbReference type="HAMAP" id="MF_00270">
    <property type="entry name" value="Ribosomal_bS18"/>
    <property type="match status" value="1"/>
</dbReference>
<dbReference type="InterPro" id="IPR001648">
    <property type="entry name" value="Ribosomal_bS18"/>
</dbReference>
<dbReference type="InterPro" id="IPR018275">
    <property type="entry name" value="Ribosomal_bS18_CS"/>
</dbReference>
<dbReference type="InterPro" id="IPR036870">
    <property type="entry name" value="Ribosomal_bS18_sf"/>
</dbReference>
<dbReference type="NCBIfam" id="TIGR00165">
    <property type="entry name" value="S18"/>
    <property type="match status" value="1"/>
</dbReference>
<dbReference type="PANTHER" id="PTHR13479">
    <property type="entry name" value="30S RIBOSOMAL PROTEIN S18"/>
    <property type="match status" value="1"/>
</dbReference>
<dbReference type="PANTHER" id="PTHR13479:SF40">
    <property type="entry name" value="SMALL RIBOSOMAL SUBUNIT PROTEIN BS18M"/>
    <property type="match status" value="1"/>
</dbReference>
<dbReference type="Pfam" id="PF01084">
    <property type="entry name" value="Ribosomal_S18"/>
    <property type="match status" value="1"/>
</dbReference>
<dbReference type="PRINTS" id="PR00974">
    <property type="entry name" value="RIBOSOMALS18"/>
</dbReference>
<dbReference type="SUPFAM" id="SSF46911">
    <property type="entry name" value="Ribosomal protein S18"/>
    <property type="match status" value="1"/>
</dbReference>
<dbReference type="PROSITE" id="PS00057">
    <property type="entry name" value="RIBOSOMAL_S18"/>
    <property type="match status" value="1"/>
</dbReference>
<evidence type="ECO:0000255" key="1">
    <source>
        <dbReference type="HAMAP-Rule" id="MF_00270"/>
    </source>
</evidence>
<evidence type="ECO:0000305" key="2"/>
<proteinExistence type="inferred from homology"/>
<keyword id="KW-0687">Ribonucleoprotein</keyword>
<keyword id="KW-0689">Ribosomal protein</keyword>
<keyword id="KW-0694">RNA-binding</keyword>
<keyword id="KW-0699">rRNA-binding</keyword>
<accession>A3NW32</accession>
<comment type="function">
    <text evidence="1">Binds as a heterodimer with protein bS6 to the central domain of the 16S rRNA, where it helps stabilize the platform of the 30S subunit.</text>
</comment>
<comment type="subunit">
    <text evidence="1">Part of the 30S ribosomal subunit. Forms a tight heterodimer with protein bS6.</text>
</comment>
<comment type="similarity">
    <text evidence="1">Belongs to the bacterial ribosomal protein bS18 family.</text>
</comment>
<sequence>MARPTGKKFDKRRQQQNPLFKRKKFCRFTAAGVEQIDYKDTETLKDFIGENGKITPARLTGTKAHYQRQLDTAIKRARFLALLPYTDQHKA</sequence>